<gene>
    <name evidence="6" type="primary">nsrD</name>
    <name type="ORF">P174DRAFT_373009</name>
</gene>
<feature type="chain" id="PRO_0000453439" description="Anthrone oxygenase nsrD">
    <location>
        <begin position="1"/>
        <end position="162"/>
    </location>
</feature>
<feature type="transmembrane region" description="Helical" evidence="1">
    <location>
        <begin position="17"/>
        <end position="37"/>
    </location>
</feature>
<feature type="transmembrane region" description="Helical" evidence="1">
    <location>
        <begin position="54"/>
        <end position="74"/>
    </location>
</feature>
<feature type="transmembrane region" description="Helical" evidence="1">
    <location>
        <begin position="86"/>
        <end position="106"/>
    </location>
</feature>
<feature type="transmembrane region" description="Helical" evidence="1">
    <location>
        <begin position="130"/>
        <end position="150"/>
    </location>
</feature>
<feature type="glycosylation site" description="N-linked (GlcNAc...) asparagine" evidence="2">
    <location>
        <position position="109"/>
    </location>
</feature>
<reference key="1">
    <citation type="journal article" date="2018" name="Proc. Natl. Acad. Sci. U.S.A.">
        <title>Linking secondary metabolites to gene clusters through genome sequencing of six diverse Aspergillus species.</title>
        <authorList>
            <person name="Kjaerboelling I."/>
            <person name="Vesth T.C."/>
            <person name="Frisvad J.C."/>
            <person name="Nybo J.L."/>
            <person name="Theobald S."/>
            <person name="Kuo A."/>
            <person name="Bowyer P."/>
            <person name="Matsuda Y."/>
            <person name="Mondo S."/>
            <person name="Lyhne E.K."/>
            <person name="Kogle M.E."/>
            <person name="Clum A."/>
            <person name="Lipzen A."/>
            <person name="Salamov A."/>
            <person name="Ngan C.Y."/>
            <person name="Daum C."/>
            <person name="Chiniquy J."/>
            <person name="Barry K."/>
            <person name="LaButti K."/>
            <person name="Haridas S."/>
            <person name="Simmons B.A."/>
            <person name="Magnuson J.K."/>
            <person name="Mortensen U.H."/>
            <person name="Larsen T.O."/>
            <person name="Grigoriev I.V."/>
            <person name="Baker S.E."/>
            <person name="Andersen M.R."/>
        </authorList>
    </citation>
    <scope>NUCLEOTIDE SEQUENCE [LARGE SCALE GENOMIC DNA]</scope>
    <source>
        <strain>IBT 16806</strain>
    </source>
</reference>
<reference key="2">
    <citation type="journal article" date="2018" name="Org. Lett.">
        <title>Genetic characterization of neosartorin biosynthesis provides insight into heterodimeric natural product generation.</title>
        <authorList>
            <person name="Matsuda Y."/>
            <person name="Gotfredsen C.H."/>
            <person name="Larsen T.O."/>
        </authorList>
    </citation>
    <scope>FUNCTION</scope>
</reference>
<reference key="3">
    <citation type="journal article" date="2020" name="Org. Lett.">
        <title>Unraveling the fungal strategy for tetrahydroxanthone biosynthesis and diversification.</title>
        <authorList>
            <person name="Wei X."/>
            <person name="Matsuda Y."/>
        </authorList>
    </citation>
    <scope>FUNCTION</scope>
    <scope>CATALYTIC ACTIVITY</scope>
    <scope>PATHWAY</scope>
</reference>
<reference key="4">
    <citation type="journal article" date="2021" name="J. Nat. Prod.">
        <title>Heterologous biosynthesis of tetrahydroxanthone dimers: determination of key factors for selective or divergent synthesis.</title>
        <authorList>
            <person name="Wei X."/>
            <person name="Chen X."/>
            <person name="Chen L."/>
            <person name="Yan D."/>
            <person name="Wang W.G."/>
            <person name="Matsuda Y."/>
        </authorList>
    </citation>
    <scope>FUNCTION</scope>
</reference>
<keyword id="KW-0325">Glycoprotein</keyword>
<keyword id="KW-0472">Membrane</keyword>
<keyword id="KW-0503">Monooxygenase</keyword>
<keyword id="KW-0560">Oxidoreductase</keyword>
<keyword id="KW-1185">Reference proteome</keyword>
<keyword id="KW-0812">Transmembrane</keyword>
<keyword id="KW-1133">Transmembrane helix</keyword>
<name>NSRD_ASPN1</name>
<accession>A0A2I1C3V3</accession>
<sequence>MTKETYVSATAVVSGSFLSGSMMSLSALVIPLFLDTIDDGPQLLRQWARLYHYGSIYMPALCVATCGIYGYVALSKRAAISPLWSPYVLAAVSTLAMVPFTWWVMVPTNNTLFGLHRSAESTELGVVQVLVVKWAWLHVVRSLYPLFGAFLGFRALIRELRT</sequence>
<protein>
    <recommendedName>
        <fullName evidence="6">Anthrone oxygenase nsrD</fullName>
        <ecNumber evidence="4">1.10.3.-</ecNumber>
    </recommendedName>
    <alternativeName>
        <fullName evidence="6">Neosartorin biosynthesis cluster protein D</fullName>
    </alternativeName>
</protein>
<comment type="function">
    <text evidence="3 4 5">Anthrone oxygenase; part of the gene cluster that mediates the biosynthesis of the tetrahydroxanthone dimer neosartorin, which exhibits antibacterial activity (PubMed:30394754, PubMed:32105084, PubMed:33891392). The two different monomeric units appear to be synthesized by the same set of enzymes, among which the Baeyer-Villiger monooxygenase nsrF is the key enzyme for the divergence of the biosynthetic routes (PubMed:32105084). The pathway begins with the synthesis of atrochrysone thioester by the polyketide synthase nsrB (PubMed:32105084). The atrochrysone carboxyl ACP thioesterase nsrC then breaks the thioester bond and releases the atrochrysone carboxylic acid from AacuL (PubMed:32105084). Atrochrysone carboxylic acid is decarboxylated by the decarboxylase nsrE, and oxidized by the anthrone oxygenase nsrD to yield emodin (PubMed:32105084). Emodin is then reduced to emodin hydroquinone by the oxidoreductase nsrR (PubMed:32105084). A-ring reduction by the short chain dehydrogenase nsrJ, dehydration by the scytalone dehydratase-like protein nsrI and probable spontaneous re-oxidation, results in overall deoxygenation to chrysophanol (PubMed:32105084). The Baeyer-Villiger monooxygenase nsrF accepts chrysophanol as a substrate to insert one oxygen atom at two different positions to yield the precursors of both monomric units (PubMed:30394754, PubMed:32105084, PubMed:33891392). NsrF is promiscuous/flexible in interacting with the 2 (non methylated and methylated) aromatic rings of chrysophanol, thus diverging the biosynthetic pathway at this point (PubMed:30394754, PubMed:32105084, PubMed:33891392). After the hydrolysis of the lactones, methylesterification by the methyltransferase nsrG yields respectively moniliphenone and 2,2',6'-trihydroxy-4-methyl-6-methoxya-cyldiphenylmethanone (PubMed:30394754, PubMed:32105084). The next steps are the hydroxylation by the FAD-dependent monooxygenase nsrK, followed by isomerization by the monooxygenase nsrQ (PubMed:32105084). The short chain dehydrogenase/reductase nsrO then catalyzes the C-5 ketoreduction to give the xanthone skeleton of blennolide C and 5-acetylblennolide A (PubMed:32105084). The acetyltransferase nsrL has a strict substrate specificity and uses only blennolide A but not blennolide C to yield 5-acetylblennolide A as the single-acetylated product (PubMed:30394754). In the final step of the biosynthesis, the heterodimerization of the 2 xanthones, blennolide C and 5-acetylblennolide A, is catalyzed by the cytochrome P450 monooxygenase nsrP (PubMed:30394754). NsrP can utilize at least three different xanthones as its substrates to perform the dimerization reaction (PubMed:30394754).</text>
</comment>
<comment type="catalytic activity">
    <reaction evidence="4">
        <text>emodin anthrone + O2 = emodin + H2O + H(+)</text>
        <dbReference type="Rhea" id="RHEA:64268"/>
        <dbReference type="ChEBI" id="CHEBI:15377"/>
        <dbReference type="ChEBI" id="CHEBI:15378"/>
        <dbReference type="ChEBI" id="CHEBI:15379"/>
        <dbReference type="ChEBI" id="CHEBI:77659"/>
        <dbReference type="ChEBI" id="CHEBI:150013"/>
    </reaction>
    <physiologicalReaction direction="left-to-right" evidence="4">
        <dbReference type="Rhea" id="RHEA:64269"/>
    </physiologicalReaction>
</comment>
<comment type="pathway">
    <text evidence="8">Secondary metabolite biosynthesis.</text>
</comment>
<comment type="subcellular location">
    <subcellularLocation>
        <location evidence="1">Membrane</location>
        <topology evidence="1">Multi-pass membrane protein</topology>
    </subcellularLocation>
</comment>
<comment type="similarity">
    <text evidence="7">Belongs to the anthrone oxygenase family.</text>
</comment>
<organism>
    <name type="scientific">Aspergillus novofumigatus (strain IBT 16806)</name>
    <dbReference type="NCBI Taxonomy" id="1392255"/>
    <lineage>
        <taxon>Eukaryota</taxon>
        <taxon>Fungi</taxon>
        <taxon>Dikarya</taxon>
        <taxon>Ascomycota</taxon>
        <taxon>Pezizomycotina</taxon>
        <taxon>Eurotiomycetes</taxon>
        <taxon>Eurotiomycetidae</taxon>
        <taxon>Eurotiales</taxon>
        <taxon>Aspergillaceae</taxon>
        <taxon>Aspergillus</taxon>
        <taxon>Aspergillus subgen. Fumigati</taxon>
    </lineage>
</organism>
<evidence type="ECO:0000255" key="1"/>
<evidence type="ECO:0000255" key="2">
    <source>
        <dbReference type="PROSITE-ProRule" id="PRU00498"/>
    </source>
</evidence>
<evidence type="ECO:0000269" key="3">
    <source>
    </source>
</evidence>
<evidence type="ECO:0000269" key="4">
    <source>
    </source>
</evidence>
<evidence type="ECO:0000269" key="5">
    <source>
    </source>
</evidence>
<evidence type="ECO:0000303" key="6">
    <source>
    </source>
</evidence>
<evidence type="ECO:0000305" key="7"/>
<evidence type="ECO:0000305" key="8">
    <source>
    </source>
</evidence>
<dbReference type="EC" id="1.10.3.-" evidence="4"/>
<dbReference type="EMBL" id="MSZS01000005">
    <property type="protein sequence ID" value="PKX92306.1"/>
    <property type="molecule type" value="Genomic_DNA"/>
</dbReference>
<dbReference type="STRING" id="1392255.A0A2I1C3V3"/>
<dbReference type="GlyCosmos" id="A0A2I1C3V3">
    <property type="glycosylation" value="1 site, No reported glycans"/>
</dbReference>
<dbReference type="VEuPathDB" id="FungiDB:P174DRAFT_373009"/>
<dbReference type="OMA" id="PFTWVFM"/>
<dbReference type="OrthoDB" id="5954308at2759"/>
<dbReference type="Proteomes" id="UP000234474">
    <property type="component" value="Unassembled WGS sequence"/>
</dbReference>
<dbReference type="GO" id="GO:0016020">
    <property type="term" value="C:membrane"/>
    <property type="evidence" value="ECO:0007669"/>
    <property type="project" value="UniProtKB-SubCell"/>
</dbReference>
<dbReference type="GO" id="GO:0004497">
    <property type="term" value="F:monooxygenase activity"/>
    <property type="evidence" value="ECO:0007669"/>
    <property type="project" value="UniProtKB-KW"/>
</dbReference>
<dbReference type="InterPro" id="IPR013901">
    <property type="entry name" value="Anthrone_oxy"/>
</dbReference>
<dbReference type="PANTHER" id="PTHR35042">
    <property type="entry name" value="ANTHRONE OXYGENASE ENCC"/>
    <property type="match status" value="1"/>
</dbReference>
<dbReference type="PANTHER" id="PTHR35042:SF3">
    <property type="entry name" value="ANTHRONE OXYGENASE-RELATED"/>
    <property type="match status" value="1"/>
</dbReference>
<dbReference type="Pfam" id="PF08592">
    <property type="entry name" value="Anthrone_oxy"/>
    <property type="match status" value="1"/>
</dbReference>
<proteinExistence type="evidence at protein level"/>